<keyword id="KW-0045">Antibiotic biosynthesis</keyword>
<keyword id="KW-0436">Ligase</keyword>
<keyword id="KW-0596">Phosphopantetheine</keyword>
<keyword id="KW-0597">Phosphoprotein</keyword>
<keyword id="KW-0677">Repeat</keyword>
<comment type="function">
    <text evidence="1 3">Involved in the biosynthesis of the siderophore pyochelin (PubMed:10555976). Accepts salicylate activated by PchD at the first peptidyl carrier domain (ArCP), and activates and fixes one molecule of cysteine at the second peptidyl carrier domain (PCP1) via a thioester linkage to the phosphopanthetheine moiety (PubMed:10555976). Then catalyzes the condensation reaction between the salicylate bound to the first site and the cysteine bound to the second site, and the cyclization of the cysteine to form the salicyl-thiazolinyl-S-PCP1 intermediate at the second site (PubMed:10555976). When this intermediate is released by the action of a thioesterase, it produces the antifungal antibiotic dihydroaeruginoic acid (Dha or hydroxyphenyl-thiazolinyl-carboxylate) (By similarity).</text>
</comment>
<comment type="catalytic activity">
    <reaction evidence="3">
        <text>holo-[peptidyl-carrier protein] + L-cysteine + ATP = L-cysteinyl-[peptidyl-carrier protein] + AMP + diphosphate</text>
        <dbReference type="Rhea" id="RHEA:61680"/>
        <dbReference type="Rhea" id="RHEA-COMP:11480"/>
        <dbReference type="Rhea" id="RHEA-COMP:15906"/>
        <dbReference type="ChEBI" id="CHEBI:30616"/>
        <dbReference type="ChEBI" id="CHEBI:33019"/>
        <dbReference type="ChEBI" id="CHEBI:35235"/>
        <dbReference type="ChEBI" id="CHEBI:64479"/>
        <dbReference type="ChEBI" id="CHEBI:144926"/>
        <dbReference type="ChEBI" id="CHEBI:456215"/>
        <dbReference type="EC" id="6.2.1.69"/>
    </reaction>
    <physiologicalReaction direction="left-to-right" evidence="3">
        <dbReference type="Rhea" id="RHEA:61681"/>
    </physiologicalReaction>
</comment>
<comment type="cofactor">
    <cofactor evidence="3">
        <name>pantetheine 4'-phosphate</name>
        <dbReference type="ChEBI" id="CHEBI:47942"/>
    </cofactor>
</comment>
<comment type="biophysicochemical properties">
    <kinetics>
        <KM evidence="3">110 uM for L-cysteine</KM>
        <text evidence="3">kcat is 38 min(-1) with L-cysteine as substrate.</text>
    </kinetics>
</comment>
<comment type="pathway">
    <text evidence="3">Siderophore biosynthesis.</text>
</comment>
<comment type="pathway">
    <text evidence="1">Antifungal biosynthesis.</text>
</comment>
<comment type="domain">
    <text evidence="6">Modular protein that contains an aryl carrier protein (ArCP) domain which bears a phosphopantetheinyl arm to attach the activated salicylic acid, a condensation/cyclization domain involved in the cyclization of the cysteine, an adenylation domain which activates the cysteine residue into an aminoacyl-AMP ester and a peptidyl carrier protein (PCP1) domain which bears a phosphopantetheinyl arm to attach the activated cysteine.</text>
</comment>
<comment type="similarity">
    <text evidence="5">Belongs to the NRP synthetase family.</text>
</comment>
<organism>
    <name type="scientific">Pseudomonas aeruginosa (strain UCBPP-PA14)</name>
    <dbReference type="NCBI Taxonomy" id="208963"/>
    <lineage>
        <taxon>Bacteria</taxon>
        <taxon>Pseudomonadati</taxon>
        <taxon>Pseudomonadota</taxon>
        <taxon>Gammaproteobacteria</taxon>
        <taxon>Pseudomonadales</taxon>
        <taxon>Pseudomonadaceae</taxon>
        <taxon>Pseudomonas</taxon>
    </lineage>
</organism>
<feature type="chain" id="PRO_0000454825" description="Pyochelin synthetase PchE">
    <location>
        <begin position="1"/>
        <end position="1438"/>
    </location>
</feature>
<feature type="domain" description="Carrier 1" evidence="2">
    <location>
        <begin position="6"/>
        <end position="85"/>
    </location>
</feature>
<feature type="domain" description="Carrier 2" evidence="2">
    <location>
        <begin position="1350"/>
        <end position="1425"/>
    </location>
</feature>
<feature type="region of interest" description="Condensation/cyclization" evidence="5">
    <location>
        <begin position="136"/>
        <end position="442"/>
    </location>
</feature>
<feature type="region of interest" description="Adenylation" evidence="5">
    <location>
        <begin position="563"/>
        <end position="950"/>
    </location>
</feature>
<feature type="modified residue" description="O-(pantetheine 4'-phosphoryl)serine" evidence="2">
    <location>
        <position position="46"/>
    </location>
</feature>
<feature type="modified residue" description="O-(pantetheine 4'-phosphoryl)serine" evidence="2">
    <location>
        <position position="1385"/>
    </location>
</feature>
<dbReference type="EC" id="6.2.1.69" evidence="3"/>
<dbReference type="EMBL" id="CP000438">
    <property type="protein sequence ID" value="ABJ13499.1"/>
    <property type="molecule type" value="Genomic_DNA"/>
</dbReference>
<dbReference type="RefSeq" id="WP_003137469.1">
    <property type="nucleotide sequence ID" value="NZ_CP034244.1"/>
</dbReference>
<dbReference type="SMR" id="A0A0H2ZGB9"/>
<dbReference type="KEGG" id="pau:PA14_09270"/>
<dbReference type="HOGENOM" id="CLU_000022_40_2_6"/>
<dbReference type="BioCyc" id="PAER208963:G1G74-773-MONOMER"/>
<dbReference type="Proteomes" id="UP000000653">
    <property type="component" value="Chromosome"/>
</dbReference>
<dbReference type="GO" id="GO:0005737">
    <property type="term" value="C:cytoplasm"/>
    <property type="evidence" value="ECO:0007669"/>
    <property type="project" value="TreeGrafter"/>
</dbReference>
<dbReference type="GO" id="GO:0016874">
    <property type="term" value="F:ligase activity"/>
    <property type="evidence" value="ECO:0007669"/>
    <property type="project" value="UniProtKB-KW"/>
</dbReference>
<dbReference type="GO" id="GO:0031177">
    <property type="term" value="F:phosphopantetheine binding"/>
    <property type="evidence" value="ECO:0007669"/>
    <property type="project" value="InterPro"/>
</dbReference>
<dbReference type="GO" id="GO:0043041">
    <property type="term" value="P:amino acid activation for nonribosomal peptide biosynthetic process"/>
    <property type="evidence" value="ECO:0007669"/>
    <property type="project" value="TreeGrafter"/>
</dbReference>
<dbReference type="GO" id="GO:0017000">
    <property type="term" value="P:antibiotic biosynthetic process"/>
    <property type="evidence" value="ECO:0007669"/>
    <property type="project" value="UniProtKB-KW"/>
</dbReference>
<dbReference type="GO" id="GO:0044550">
    <property type="term" value="P:secondary metabolite biosynthetic process"/>
    <property type="evidence" value="ECO:0007669"/>
    <property type="project" value="TreeGrafter"/>
</dbReference>
<dbReference type="CDD" id="cd12114">
    <property type="entry name" value="A_NRPS_TlmIV_like"/>
    <property type="match status" value="1"/>
</dbReference>
<dbReference type="CDD" id="cd19535">
    <property type="entry name" value="Cyc_NRPS"/>
    <property type="match status" value="1"/>
</dbReference>
<dbReference type="FunFam" id="1.10.1200.10:FF:000021">
    <property type="entry name" value="Isochorismatase"/>
    <property type="match status" value="1"/>
</dbReference>
<dbReference type="FunFam" id="1.10.1200.10:FF:000016">
    <property type="entry name" value="Non-ribosomal peptide synthase"/>
    <property type="match status" value="1"/>
</dbReference>
<dbReference type="FunFam" id="3.30.559.10:FF:000023">
    <property type="entry name" value="Non-ribosomal peptide synthetase"/>
    <property type="match status" value="1"/>
</dbReference>
<dbReference type="FunFam" id="3.40.50.12780:FF:000012">
    <property type="entry name" value="Non-ribosomal peptide synthetase"/>
    <property type="match status" value="1"/>
</dbReference>
<dbReference type="FunFam" id="3.30.559.30:FF:000006">
    <property type="entry name" value="Yersiniabactin polyketide/non-ribosomal peptide synthetase"/>
    <property type="match status" value="1"/>
</dbReference>
<dbReference type="Gene3D" id="3.30.300.30">
    <property type="match status" value="2"/>
</dbReference>
<dbReference type="Gene3D" id="1.10.1200.10">
    <property type="entry name" value="ACP-like"/>
    <property type="match status" value="2"/>
</dbReference>
<dbReference type="Gene3D" id="3.30.559.10">
    <property type="entry name" value="Chloramphenicol acetyltransferase-like domain"/>
    <property type="match status" value="1"/>
</dbReference>
<dbReference type="Gene3D" id="3.40.50.12780">
    <property type="entry name" value="N-terminal domain of ligase-like"/>
    <property type="match status" value="1"/>
</dbReference>
<dbReference type="Gene3D" id="3.30.559.30">
    <property type="entry name" value="Nonribosomal peptide synthetase, condensation domain"/>
    <property type="match status" value="1"/>
</dbReference>
<dbReference type="Gene3D" id="3.40.50.150">
    <property type="entry name" value="Vaccinia Virus protein VP39"/>
    <property type="match status" value="1"/>
</dbReference>
<dbReference type="InterPro" id="IPR010071">
    <property type="entry name" value="AA_adenyl_dom"/>
</dbReference>
<dbReference type="InterPro" id="IPR036736">
    <property type="entry name" value="ACP-like_sf"/>
</dbReference>
<dbReference type="InterPro" id="IPR045851">
    <property type="entry name" value="AMP-bd_C_sf"/>
</dbReference>
<dbReference type="InterPro" id="IPR020845">
    <property type="entry name" value="AMP-binding_CS"/>
</dbReference>
<dbReference type="InterPro" id="IPR000873">
    <property type="entry name" value="AMP-dep_synth/lig_dom"/>
</dbReference>
<dbReference type="InterPro" id="IPR042099">
    <property type="entry name" value="ANL_N_sf"/>
</dbReference>
<dbReference type="InterPro" id="IPR023213">
    <property type="entry name" value="CAT-like_dom_sf"/>
</dbReference>
<dbReference type="InterPro" id="IPR001242">
    <property type="entry name" value="Condensatn"/>
</dbReference>
<dbReference type="InterPro" id="IPR020806">
    <property type="entry name" value="PKS_PP-bd"/>
</dbReference>
<dbReference type="InterPro" id="IPR009081">
    <property type="entry name" value="PP-bd_ACP"/>
</dbReference>
<dbReference type="InterPro" id="IPR006162">
    <property type="entry name" value="Ppantetheine_attach_site"/>
</dbReference>
<dbReference type="InterPro" id="IPR029063">
    <property type="entry name" value="SAM-dependent_MTases_sf"/>
</dbReference>
<dbReference type="NCBIfam" id="TIGR01733">
    <property type="entry name" value="AA-adenyl-dom"/>
    <property type="match status" value="1"/>
</dbReference>
<dbReference type="PANTHER" id="PTHR45527:SF1">
    <property type="entry name" value="FATTY ACID SYNTHASE"/>
    <property type="match status" value="1"/>
</dbReference>
<dbReference type="PANTHER" id="PTHR45527">
    <property type="entry name" value="NONRIBOSOMAL PEPTIDE SYNTHETASE"/>
    <property type="match status" value="1"/>
</dbReference>
<dbReference type="Pfam" id="PF00501">
    <property type="entry name" value="AMP-binding"/>
    <property type="match status" value="1"/>
</dbReference>
<dbReference type="Pfam" id="PF00668">
    <property type="entry name" value="Condensation"/>
    <property type="match status" value="1"/>
</dbReference>
<dbReference type="Pfam" id="PF00550">
    <property type="entry name" value="PP-binding"/>
    <property type="match status" value="2"/>
</dbReference>
<dbReference type="SMART" id="SM00823">
    <property type="entry name" value="PKS_PP"/>
    <property type="match status" value="1"/>
</dbReference>
<dbReference type="SUPFAM" id="SSF56801">
    <property type="entry name" value="Acetyl-CoA synthetase-like"/>
    <property type="match status" value="1"/>
</dbReference>
<dbReference type="SUPFAM" id="SSF47336">
    <property type="entry name" value="ACP-like"/>
    <property type="match status" value="2"/>
</dbReference>
<dbReference type="SUPFAM" id="SSF52777">
    <property type="entry name" value="CoA-dependent acyltransferases"/>
    <property type="match status" value="2"/>
</dbReference>
<dbReference type="SUPFAM" id="SSF53335">
    <property type="entry name" value="S-adenosyl-L-methionine-dependent methyltransferases"/>
    <property type="match status" value="1"/>
</dbReference>
<dbReference type="PROSITE" id="PS00455">
    <property type="entry name" value="AMP_BINDING"/>
    <property type="match status" value="1"/>
</dbReference>
<dbReference type="PROSITE" id="PS50075">
    <property type="entry name" value="CARRIER"/>
    <property type="match status" value="1"/>
</dbReference>
<dbReference type="PROSITE" id="PS00012">
    <property type="entry name" value="PHOSPHOPANTETHEINE"/>
    <property type="match status" value="1"/>
</dbReference>
<proteinExistence type="evidence at protein level"/>
<reference key="1">
    <citation type="journal article" date="2006" name="Genome Biol.">
        <title>Genomic analysis reveals that Pseudomonas aeruginosa virulence is combinatorial.</title>
        <authorList>
            <person name="Lee D.G."/>
            <person name="Urbach J.M."/>
            <person name="Wu G."/>
            <person name="Liberati N.T."/>
            <person name="Feinbaum R.L."/>
            <person name="Miyata S."/>
            <person name="Diggins L.T."/>
            <person name="He J."/>
            <person name="Saucier M."/>
            <person name="Deziel E."/>
            <person name="Friedman L."/>
            <person name="Li L."/>
            <person name="Grills G."/>
            <person name="Montgomery K."/>
            <person name="Kucherlapati R."/>
            <person name="Rahme L.G."/>
            <person name="Ausubel F.M."/>
        </authorList>
    </citation>
    <scope>NUCLEOTIDE SEQUENCE [LARGE SCALE GENOMIC DNA]</scope>
    <source>
        <strain>UCBPP-PA14</strain>
    </source>
</reference>
<reference key="2">
    <citation type="journal article" date="1999" name="Biochemistry">
        <title>Assembly of the Pseudomonas aeruginosa nonribosomal peptide siderophore pyochelin: In vitro reconstitution of aryl-4, 2-bisthiazoline synthetase activity from PchD, PchE, and PchF.</title>
        <authorList>
            <person name="Quadri L.E."/>
            <person name="Keating T.A."/>
            <person name="Patel H.M."/>
            <person name="Walsh C.T."/>
        </authorList>
    </citation>
    <scope>FUNCTION</scope>
    <scope>CATALYTIC ACTIVITY</scope>
    <scope>COFACTOR</scope>
    <scope>BIOPHYSICOCHEMICAL PROPERTIES</scope>
    <scope>PATHWAY</scope>
    <scope>DOMAIN</scope>
    <source>
        <strain>UCBPP-PA14</strain>
    </source>
</reference>
<evidence type="ECO:0000250" key="1">
    <source>
        <dbReference type="UniProtKB" id="G3XCV2"/>
    </source>
</evidence>
<evidence type="ECO:0000255" key="2">
    <source>
        <dbReference type="PROSITE-ProRule" id="PRU00258"/>
    </source>
</evidence>
<evidence type="ECO:0000269" key="3">
    <source>
    </source>
</evidence>
<evidence type="ECO:0000303" key="4">
    <source>
    </source>
</evidence>
<evidence type="ECO:0000305" key="5"/>
<evidence type="ECO:0000305" key="6">
    <source>
    </source>
</evidence>
<evidence type="ECO:0000312" key="7">
    <source>
        <dbReference type="EMBL" id="ABJ13499.1"/>
    </source>
</evidence>
<gene>
    <name evidence="4" type="primary">pchE</name>
    <name evidence="7" type="ordered locus">PA14_09270</name>
</gene>
<name>PCHE_PSEAB</name>
<sequence>MDLPPDSRTALRDWLTEQLADLLGEPLADVRALADDDDLLGCGLDSIRLMYLQERLRARGSTLDFAQLAQRPCLGAWLDLLACADRLSAPATVALPTVQDRDQPFELSSVQQAYWLGRGAGEVLGNVSCHAFLEFRTRDVDPQRLAAAAECVRQRHPMLRARFFDGRQQILPTPPLSCFDLQDWRTLQVDEAERDWQALRDWRAHECLAVERGQVFLLGLVRMPGGEDRLWLSLDLLAADVESLRLLLAELGVAYLAPERLAEPPALHFADYLARRAAQRAEAAARARDYWLERLPRLPDAPALPLACAPESIRQPRTRRLAFQLSAGESRRLERLAAQHGVTLSSVFGCAFALVLARWSESAEFLLNVPLFDRHADDPRIGEVIADFTTLLLLECRMQAGVSFAEAVKSFQRNLHGAIDHAAFPALEVLREARRQGQPRSAPVVFASNLGEEGFVPAAFRDAFGDLHDMLSQTPQVWLDHQLYRVGDGILLAWDSVVGLFPEGLPETMFEAYVGLLQRLCDSTWEQPADLPLPWAQQARRALLNGQPACATARTLHRDFFLRAAEAPDADALLYRDQRVTRGELAERALRIAGGLREAGVRPGDAVEVSLPRGPQQVAAVFGVLAAGACYVPLDIDQPPARRRLIEEAAGVCLAITEEDDPQALPPRLDVQRLLRGPALAAPVPLAPQASAYVIYTSGSTGVPKGVEVSHAAAINTIDALLDLLRVDAADRLLAVSALDFDLSVFDLFGGLGAGASLVLPAQEQARDAAAWAEAIQRHAVSLWNSAPALLEMALSLPASQADYRSLRAVLLSGDWVALDLPGRLRPRCAEGCRLHVLGGATEAGIWSNLQSVDTVPPHWRSIPYGRPLPGQAYRVVDAHGRDVPDLVVGELWIGGASLARGYRNDPELSARRFVHDAQGRWYRTGDRGRYWDDGTLEFLGRVDQQVKVRGQRIELGEVEAALCAQAGVESACAAVLGGGVASLGAVLVPRLAPRAEGSMELPAAQPFAGLAEAEAVLTREILGALLEAPLELDDGLRRRWLDWLADSAASALPPLDEALRRLGWQAAGLTAMGNALRGLLAGEQAPAALLLDPWLAPQAVAARLPDGREALARLLEALPTPAAGERLRVAVLDTRAGLWLDQGMASLLRPGLELTLFERSRVLLDAAATRLPERIVVQALDDGLLPAEHLGRYDRVISFAALHAYAASREGLALAAALLRPQGRLLLVDLLCESPLALLGAALLDDRPLRLAELPSLLADLAAAGLAPRCLWRSERIALVEALAPGLGLDAAALQAGLEQRLPQAMRPERLWCLPSLPLNGNGKVDRRRLAESMTRALGECRDEPSAEEPLEAHEQALAECWEAVLKRPVRRREASFFSLGGDSLLATRLLAGIRERFGVRLGMADFYRQPTLAGLARHLQAQTVEIEETQLEEGVL</sequence>
<protein>
    <recommendedName>
        <fullName evidence="5">Pyochelin synthetase PchE</fullName>
        <ecNumber evidence="3">6.2.1.69</ecNumber>
    </recommendedName>
    <alternativeName>
        <fullName evidence="5">L-cysteine--[L-cysteinyl-carrier protein] ligase</fullName>
    </alternativeName>
    <alternativeName>
        <fullName evidence="5">Nonribosomal peptide synthetase PchE</fullName>
    </alternativeName>
</protein>
<accession>A0A0H2ZGB9</accession>